<proteinExistence type="inferred from homology"/>
<reference key="1">
    <citation type="journal article" date="2005" name="J. Infect. Dis.">
        <title>Genome sequence of a serotype M28 strain of group A Streptococcus: potential new insights into puerperal sepsis and bacterial disease specificity.</title>
        <authorList>
            <person name="Green N.M."/>
            <person name="Zhang S."/>
            <person name="Porcella S.F."/>
            <person name="Nagiec M.J."/>
            <person name="Barbian K.D."/>
            <person name="Beres S.B."/>
            <person name="Lefebvre R.B."/>
            <person name="Musser J.M."/>
        </authorList>
    </citation>
    <scope>NUCLEOTIDE SEQUENCE [LARGE SCALE GENOMIC DNA]</scope>
    <source>
        <strain>MGAS6180</strain>
    </source>
</reference>
<accession>Q48RC3</accession>
<evidence type="ECO:0000255" key="1">
    <source>
        <dbReference type="HAMAP-Rule" id="MF_01556"/>
    </source>
</evidence>
<comment type="catalytic activity">
    <reaction evidence="1">
        <text>aldehydo-D-galactose 6-phosphate = keto-D-tagatose 6-phosphate</text>
        <dbReference type="Rhea" id="RHEA:13033"/>
        <dbReference type="ChEBI" id="CHEBI:58255"/>
        <dbReference type="ChEBI" id="CHEBI:134283"/>
        <dbReference type="EC" id="5.3.1.26"/>
    </reaction>
</comment>
<comment type="pathway">
    <text evidence="1">Carbohydrate metabolism; D-galactose 6-phosphate degradation; D-tagatose 6-phosphate from D-galactose 6-phosphate: step 1/1.</text>
</comment>
<comment type="subunit">
    <text evidence="1">Heteromultimeric protein consisting of LacA and LacB.</text>
</comment>
<comment type="similarity">
    <text evidence="1">Belongs to the LacAB/RpiB family.</text>
</comment>
<protein>
    <recommendedName>
        <fullName evidence="1">Galactose-6-phosphate isomerase subunit LacB 2</fullName>
        <ecNumber evidence="1">5.3.1.26</ecNumber>
    </recommendedName>
</protein>
<gene>
    <name evidence="1" type="primary">lacB2</name>
    <name type="synonym">lacB.2</name>
    <name type="ordered locus">M28_Spy1627</name>
</gene>
<dbReference type="EC" id="5.3.1.26" evidence="1"/>
<dbReference type="EMBL" id="CP000056">
    <property type="protein sequence ID" value="AAX72737.1"/>
    <property type="molecule type" value="Genomic_DNA"/>
</dbReference>
<dbReference type="RefSeq" id="WP_011285170.1">
    <property type="nucleotide sequence ID" value="NC_007296.2"/>
</dbReference>
<dbReference type="SMR" id="Q48RC3"/>
<dbReference type="KEGG" id="spb:M28_Spy1627"/>
<dbReference type="HOGENOM" id="CLU_091396_2_0_9"/>
<dbReference type="UniPathway" id="UPA00702">
    <property type="reaction ID" value="UER00714"/>
</dbReference>
<dbReference type="GO" id="GO:0050044">
    <property type="term" value="F:galactose-6-phosphate isomerase activity"/>
    <property type="evidence" value="ECO:0007669"/>
    <property type="project" value="UniProtKB-UniRule"/>
</dbReference>
<dbReference type="GO" id="GO:0004751">
    <property type="term" value="F:ribose-5-phosphate isomerase activity"/>
    <property type="evidence" value="ECO:0007669"/>
    <property type="project" value="TreeGrafter"/>
</dbReference>
<dbReference type="GO" id="GO:0019316">
    <property type="term" value="P:D-allose catabolic process"/>
    <property type="evidence" value="ECO:0007669"/>
    <property type="project" value="TreeGrafter"/>
</dbReference>
<dbReference type="GO" id="GO:0019388">
    <property type="term" value="P:galactose catabolic process"/>
    <property type="evidence" value="ECO:0007669"/>
    <property type="project" value="UniProtKB-UniPathway"/>
</dbReference>
<dbReference type="GO" id="GO:0019512">
    <property type="term" value="P:lactose catabolic process via tagatose-6-phosphate"/>
    <property type="evidence" value="ECO:0007669"/>
    <property type="project" value="UniProtKB-UniRule"/>
</dbReference>
<dbReference type="GO" id="GO:0009052">
    <property type="term" value="P:pentose-phosphate shunt, non-oxidative branch"/>
    <property type="evidence" value="ECO:0007669"/>
    <property type="project" value="TreeGrafter"/>
</dbReference>
<dbReference type="Gene3D" id="3.40.1400.10">
    <property type="entry name" value="Sugar-phosphate isomerase, RpiB/LacA/LacB"/>
    <property type="match status" value="1"/>
</dbReference>
<dbReference type="HAMAP" id="MF_01556">
    <property type="entry name" value="LacB"/>
    <property type="match status" value="1"/>
</dbReference>
<dbReference type="InterPro" id="IPR004784">
    <property type="entry name" value="LacB"/>
</dbReference>
<dbReference type="InterPro" id="IPR003500">
    <property type="entry name" value="RpiB_LacA_LacB"/>
</dbReference>
<dbReference type="InterPro" id="IPR036569">
    <property type="entry name" value="RpiB_LacA_LacB_sf"/>
</dbReference>
<dbReference type="NCBIfam" id="NF004051">
    <property type="entry name" value="PRK05571.1"/>
    <property type="match status" value="1"/>
</dbReference>
<dbReference type="NCBIfam" id="NF006381">
    <property type="entry name" value="PRK08622.1"/>
    <property type="match status" value="1"/>
</dbReference>
<dbReference type="NCBIfam" id="TIGR00689">
    <property type="entry name" value="rpiB_lacA_lacB"/>
    <property type="match status" value="1"/>
</dbReference>
<dbReference type="PANTHER" id="PTHR30345:SF0">
    <property type="entry name" value="DNA DAMAGE-REPAIR_TOLERATION PROTEIN DRT102"/>
    <property type="match status" value="1"/>
</dbReference>
<dbReference type="PANTHER" id="PTHR30345">
    <property type="entry name" value="RIBOSE-5-PHOSPHATE ISOMERASE B"/>
    <property type="match status" value="1"/>
</dbReference>
<dbReference type="Pfam" id="PF02502">
    <property type="entry name" value="LacAB_rpiB"/>
    <property type="match status" value="1"/>
</dbReference>
<dbReference type="PIRSF" id="PIRSF005384">
    <property type="entry name" value="RpiB_LacA_B"/>
    <property type="match status" value="1"/>
</dbReference>
<dbReference type="SUPFAM" id="SSF89623">
    <property type="entry name" value="Ribose/Galactose isomerase RpiB/AlsB"/>
    <property type="match status" value="1"/>
</dbReference>
<keyword id="KW-0413">Isomerase</keyword>
<keyword id="KW-0423">Lactose metabolism</keyword>
<organism>
    <name type="scientific">Streptococcus pyogenes serotype M28 (strain MGAS6180)</name>
    <dbReference type="NCBI Taxonomy" id="319701"/>
    <lineage>
        <taxon>Bacteria</taxon>
        <taxon>Bacillati</taxon>
        <taxon>Bacillota</taxon>
        <taxon>Bacilli</taxon>
        <taxon>Lactobacillales</taxon>
        <taxon>Streptococcaceae</taxon>
        <taxon>Streptococcus</taxon>
    </lineage>
</organism>
<feature type="chain" id="PRO_0000208158" description="Galactose-6-phosphate isomerase subunit LacB 2">
    <location>
        <begin position="1"/>
        <end position="171"/>
    </location>
</feature>
<sequence>MKIAVGCDHIVTYEKIAVVDYLKSQGHEIIDCGTYDNVRTHYPIFGKKVGEAVASGEAELGVVICGTGVGITNAVNKVPGIRAALVRDMTSAIYSKEELNANVIGFGGKIIGGLLMNDIIDAFLAAEYKPTEENKKWIEKMDSLQHASQDQNNPHFFDEFLEKWDRGEYHD</sequence>
<name>LACB2_STRPM</name>